<sequence>MEKYLIVGLGNPGSNYAKTRHNAGFMVINEICNKLNLFLDNSKFNGMFAKTIYNNCVVFFCQPTTYMNLSGEFVSKMLKFYDIPIKNLIVIYDDVDTKLGVIKLRKKGSSGGQNGIKNIINLLKTEEIKRIRVGIGKDPHAKLDQYVLSNFKIDELVIIKPAIIKGALAALEAIGEDFDKVMNKFN</sequence>
<gene>
    <name evidence="1" type="primary">pth</name>
    <name type="ordered locus">UUR10_0084</name>
</gene>
<keyword id="KW-0963">Cytoplasm</keyword>
<keyword id="KW-0378">Hydrolase</keyword>
<keyword id="KW-0694">RNA-binding</keyword>
<keyword id="KW-0820">tRNA-binding</keyword>
<evidence type="ECO:0000255" key="1">
    <source>
        <dbReference type="HAMAP-Rule" id="MF_00083"/>
    </source>
</evidence>
<organism>
    <name type="scientific">Ureaplasma urealyticum serovar 10 (strain ATCC 33699 / Western)</name>
    <dbReference type="NCBI Taxonomy" id="565575"/>
    <lineage>
        <taxon>Bacteria</taxon>
        <taxon>Bacillati</taxon>
        <taxon>Mycoplasmatota</taxon>
        <taxon>Mycoplasmoidales</taxon>
        <taxon>Mycoplasmoidaceae</taxon>
        <taxon>Ureaplasma</taxon>
    </lineage>
</organism>
<comment type="function">
    <text evidence="1">Hydrolyzes ribosome-free peptidyl-tRNAs (with 1 or more amino acids incorporated), which drop off the ribosome during protein synthesis, or as a result of ribosome stalling.</text>
</comment>
<comment type="function">
    <text evidence="1">Catalyzes the release of premature peptidyl moieties from peptidyl-tRNA molecules trapped in stalled 50S ribosomal subunits, and thus maintains levels of free tRNAs and 50S ribosomes.</text>
</comment>
<comment type="catalytic activity">
    <reaction evidence="1">
        <text>an N-acyl-L-alpha-aminoacyl-tRNA + H2O = an N-acyl-L-amino acid + a tRNA + H(+)</text>
        <dbReference type="Rhea" id="RHEA:54448"/>
        <dbReference type="Rhea" id="RHEA-COMP:10123"/>
        <dbReference type="Rhea" id="RHEA-COMP:13883"/>
        <dbReference type="ChEBI" id="CHEBI:15377"/>
        <dbReference type="ChEBI" id="CHEBI:15378"/>
        <dbReference type="ChEBI" id="CHEBI:59874"/>
        <dbReference type="ChEBI" id="CHEBI:78442"/>
        <dbReference type="ChEBI" id="CHEBI:138191"/>
        <dbReference type="EC" id="3.1.1.29"/>
    </reaction>
</comment>
<comment type="subunit">
    <text evidence="1">Monomer.</text>
</comment>
<comment type="subcellular location">
    <subcellularLocation>
        <location evidence="1">Cytoplasm</location>
    </subcellularLocation>
</comment>
<comment type="similarity">
    <text evidence="1">Belongs to the PTH family.</text>
</comment>
<feature type="chain" id="PRO_1000093000" description="Peptidyl-tRNA hydrolase">
    <location>
        <begin position="1"/>
        <end position="186"/>
    </location>
</feature>
<feature type="active site" description="Proton acceptor" evidence="1">
    <location>
        <position position="21"/>
    </location>
</feature>
<feature type="binding site" evidence="1">
    <location>
        <position position="16"/>
    </location>
    <ligand>
        <name>tRNA</name>
        <dbReference type="ChEBI" id="CHEBI:17843"/>
    </ligand>
</feature>
<feature type="binding site" evidence="1">
    <location>
        <position position="66"/>
    </location>
    <ligand>
        <name>tRNA</name>
        <dbReference type="ChEBI" id="CHEBI:17843"/>
    </ligand>
</feature>
<feature type="binding site" evidence="1">
    <location>
        <position position="68"/>
    </location>
    <ligand>
        <name>tRNA</name>
        <dbReference type="ChEBI" id="CHEBI:17843"/>
    </ligand>
</feature>
<feature type="binding site" evidence="1">
    <location>
        <position position="114"/>
    </location>
    <ligand>
        <name>tRNA</name>
        <dbReference type="ChEBI" id="CHEBI:17843"/>
    </ligand>
</feature>
<feature type="site" description="Discriminates between blocked and unblocked aminoacyl-tRNA" evidence="1">
    <location>
        <position position="11"/>
    </location>
</feature>
<feature type="site" description="Stabilizes the basic form of H active site to accept a proton" evidence="1">
    <location>
        <position position="93"/>
    </location>
</feature>
<name>PTH_UREU1</name>
<dbReference type="EC" id="3.1.1.29" evidence="1"/>
<dbReference type="EMBL" id="CP001184">
    <property type="protein sequence ID" value="ACI59843.1"/>
    <property type="molecule type" value="Genomic_DNA"/>
</dbReference>
<dbReference type="RefSeq" id="WP_004027158.1">
    <property type="nucleotide sequence ID" value="NC_011374.1"/>
</dbReference>
<dbReference type="SMR" id="B5ZAQ7"/>
<dbReference type="STRING" id="565575.UUR10_0084"/>
<dbReference type="KEGG" id="uue:UUR10_0084"/>
<dbReference type="eggNOG" id="COG0193">
    <property type="taxonomic scope" value="Bacteria"/>
</dbReference>
<dbReference type="HOGENOM" id="CLU_062456_4_1_14"/>
<dbReference type="OrthoDB" id="9800507at2"/>
<dbReference type="Proteomes" id="UP000002018">
    <property type="component" value="Chromosome"/>
</dbReference>
<dbReference type="GO" id="GO:0005737">
    <property type="term" value="C:cytoplasm"/>
    <property type="evidence" value="ECO:0007669"/>
    <property type="project" value="UniProtKB-SubCell"/>
</dbReference>
<dbReference type="GO" id="GO:0004045">
    <property type="term" value="F:peptidyl-tRNA hydrolase activity"/>
    <property type="evidence" value="ECO:0007669"/>
    <property type="project" value="UniProtKB-UniRule"/>
</dbReference>
<dbReference type="GO" id="GO:0000049">
    <property type="term" value="F:tRNA binding"/>
    <property type="evidence" value="ECO:0007669"/>
    <property type="project" value="UniProtKB-UniRule"/>
</dbReference>
<dbReference type="GO" id="GO:0006515">
    <property type="term" value="P:protein quality control for misfolded or incompletely synthesized proteins"/>
    <property type="evidence" value="ECO:0007669"/>
    <property type="project" value="UniProtKB-UniRule"/>
</dbReference>
<dbReference type="GO" id="GO:0072344">
    <property type="term" value="P:rescue of stalled ribosome"/>
    <property type="evidence" value="ECO:0007669"/>
    <property type="project" value="UniProtKB-UniRule"/>
</dbReference>
<dbReference type="CDD" id="cd00462">
    <property type="entry name" value="PTH"/>
    <property type="match status" value="1"/>
</dbReference>
<dbReference type="FunFam" id="3.40.50.1470:FF:000001">
    <property type="entry name" value="Peptidyl-tRNA hydrolase"/>
    <property type="match status" value="1"/>
</dbReference>
<dbReference type="Gene3D" id="3.40.50.1470">
    <property type="entry name" value="Peptidyl-tRNA hydrolase"/>
    <property type="match status" value="1"/>
</dbReference>
<dbReference type="HAMAP" id="MF_00083">
    <property type="entry name" value="Pept_tRNA_hydro_bact"/>
    <property type="match status" value="1"/>
</dbReference>
<dbReference type="InterPro" id="IPR001328">
    <property type="entry name" value="Pept_tRNA_hydro"/>
</dbReference>
<dbReference type="InterPro" id="IPR018171">
    <property type="entry name" value="Pept_tRNA_hydro_CS"/>
</dbReference>
<dbReference type="InterPro" id="IPR036416">
    <property type="entry name" value="Pept_tRNA_hydro_sf"/>
</dbReference>
<dbReference type="NCBIfam" id="TIGR00447">
    <property type="entry name" value="pth"/>
    <property type="match status" value="1"/>
</dbReference>
<dbReference type="PANTHER" id="PTHR17224">
    <property type="entry name" value="PEPTIDYL-TRNA HYDROLASE"/>
    <property type="match status" value="1"/>
</dbReference>
<dbReference type="PANTHER" id="PTHR17224:SF1">
    <property type="entry name" value="PEPTIDYL-TRNA HYDROLASE"/>
    <property type="match status" value="1"/>
</dbReference>
<dbReference type="Pfam" id="PF01195">
    <property type="entry name" value="Pept_tRNA_hydro"/>
    <property type="match status" value="1"/>
</dbReference>
<dbReference type="SUPFAM" id="SSF53178">
    <property type="entry name" value="Peptidyl-tRNA hydrolase-like"/>
    <property type="match status" value="1"/>
</dbReference>
<dbReference type="PROSITE" id="PS01195">
    <property type="entry name" value="PEPT_TRNA_HYDROL_1"/>
    <property type="match status" value="1"/>
</dbReference>
<protein>
    <recommendedName>
        <fullName evidence="1">Peptidyl-tRNA hydrolase</fullName>
        <shortName evidence="1">Pth</shortName>
        <ecNumber evidence="1">3.1.1.29</ecNumber>
    </recommendedName>
</protein>
<accession>B5ZAQ7</accession>
<reference key="1">
    <citation type="submission" date="2008-10" db="EMBL/GenBank/DDBJ databases">
        <title>Genome sequence of Ureaplasma urealyticum serovar 10 ATCC-33699.</title>
        <authorList>
            <person name="Shrivastava S."/>
            <person name="Methe B.A."/>
            <person name="Glass J."/>
            <person name="White K."/>
            <person name="Duffy L.B."/>
        </authorList>
    </citation>
    <scope>NUCLEOTIDE SEQUENCE [LARGE SCALE GENOMIC DNA]</scope>
    <source>
        <strain>ATCC 33699 / Western</strain>
    </source>
</reference>
<proteinExistence type="inferred from homology"/>